<dbReference type="EC" id="1.1.1.27" evidence="1"/>
<dbReference type="EMBL" id="CP000924">
    <property type="protein sequence ID" value="ABY95623.1"/>
    <property type="molecule type" value="Genomic_DNA"/>
</dbReference>
<dbReference type="RefSeq" id="WP_003867072.1">
    <property type="nucleotide sequence ID" value="NC_010321.1"/>
</dbReference>
<dbReference type="SMR" id="B0KDA4"/>
<dbReference type="STRING" id="340099.Teth39_1997"/>
<dbReference type="KEGG" id="tpd:Teth39_1997"/>
<dbReference type="eggNOG" id="COG0039">
    <property type="taxonomic scope" value="Bacteria"/>
</dbReference>
<dbReference type="HOGENOM" id="CLU_045401_1_1_9"/>
<dbReference type="UniPathway" id="UPA00554">
    <property type="reaction ID" value="UER00611"/>
</dbReference>
<dbReference type="Proteomes" id="UP000002156">
    <property type="component" value="Chromosome"/>
</dbReference>
<dbReference type="GO" id="GO:0005737">
    <property type="term" value="C:cytoplasm"/>
    <property type="evidence" value="ECO:0007669"/>
    <property type="project" value="UniProtKB-SubCell"/>
</dbReference>
<dbReference type="GO" id="GO:0004459">
    <property type="term" value="F:L-lactate dehydrogenase activity"/>
    <property type="evidence" value="ECO:0007669"/>
    <property type="project" value="UniProtKB-UniRule"/>
</dbReference>
<dbReference type="GO" id="GO:0006096">
    <property type="term" value="P:glycolytic process"/>
    <property type="evidence" value="ECO:0007669"/>
    <property type="project" value="UniProtKB-UniRule"/>
</dbReference>
<dbReference type="GO" id="GO:0006089">
    <property type="term" value="P:lactate metabolic process"/>
    <property type="evidence" value="ECO:0007669"/>
    <property type="project" value="TreeGrafter"/>
</dbReference>
<dbReference type="CDD" id="cd05292">
    <property type="entry name" value="LDH_2"/>
    <property type="match status" value="1"/>
</dbReference>
<dbReference type="FunFam" id="3.40.50.720:FF:000018">
    <property type="entry name" value="Malate dehydrogenase"/>
    <property type="match status" value="1"/>
</dbReference>
<dbReference type="Gene3D" id="3.90.110.10">
    <property type="entry name" value="Lactate dehydrogenase/glycoside hydrolase, family 4, C-terminal"/>
    <property type="match status" value="1"/>
</dbReference>
<dbReference type="Gene3D" id="3.40.50.720">
    <property type="entry name" value="NAD(P)-binding Rossmann-like Domain"/>
    <property type="match status" value="1"/>
</dbReference>
<dbReference type="HAMAP" id="MF_00488">
    <property type="entry name" value="Lactate_dehydrog"/>
    <property type="match status" value="1"/>
</dbReference>
<dbReference type="InterPro" id="IPR001557">
    <property type="entry name" value="L-lactate/malate_DH"/>
</dbReference>
<dbReference type="InterPro" id="IPR011304">
    <property type="entry name" value="L-lactate_DH"/>
</dbReference>
<dbReference type="InterPro" id="IPR018177">
    <property type="entry name" value="L-lactate_DH_AS"/>
</dbReference>
<dbReference type="InterPro" id="IPR022383">
    <property type="entry name" value="Lactate/malate_DH_C"/>
</dbReference>
<dbReference type="InterPro" id="IPR001236">
    <property type="entry name" value="Lactate/malate_DH_N"/>
</dbReference>
<dbReference type="InterPro" id="IPR015955">
    <property type="entry name" value="Lactate_DH/Glyco_Ohase_4_C"/>
</dbReference>
<dbReference type="InterPro" id="IPR036291">
    <property type="entry name" value="NAD(P)-bd_dom_sf"/>
</dbReference>
<dbReference type="NCBIfam" id="TIGR01771">
    <property type="entry name" value="L-LDH-NAD"/>
    <property type="match status" value="1"/>
</dbReference>
<dbReference type="NCBIfam" id="NF000824">
    <property type="entry name" value="PRK00066.1"/>
    <property type="match status" value="1"/>
</dbReference>
<dbReference type="NCBIfam" id="NF004863">
    <property type="entry name" value="PRK06223.1"/>
    <property type="match status" value="1"/>
</dbReference>
<dbReference type="PANTHER" id="PTHR43128">
    <property type="entry name" value="L-2-HYDROXYCARBOXYLATE DEHYDROGENASE (NAD(P)(+))"/>
    <property type="match status" value="1"/>
</dbReference>
<dbReference type="PANTHER" id="PTHR43128:SF16">
    <property type="entry name" value="L-LACTATE DEHYDROGENASE"/>
    <property type="match status" value="1"/>
</dbReference>
<dbReference type="Pfam" id="PF02866">
    <property type="entry name" value="Ldh_1_C"/>
    <property type="match status" value="1"/>
</dbReference>
<dbReference type="Pfam" id="PF00056">
    <property type="entry name" value="Ldh_1_N"/>
    <property type="match status" value="1"/>
</dbReference>
<dbReference type="PIRSF" id="PIRSF000102">
    <property type="entry name" value="Lac_mal_DH"/>
    <property type="match status" value="1"/>
</dbReference>
<dbReference type="PRINTS" id="PR00086">
    <property type="entry name" value="LLDHDRGNASE"/>
</dbReference>
<dbReference type="SUPFAM" id="SSF56327">
    <property type="entry name" value="LDH C-terminal domain-like"/>
    <property type="match status" value="1"/>
</dbReference>
<dbReference type="SUPFAM" id="SSF51735">
    <property type="entry name" value="NAD(P)-binding Rossmann-fold domains"/>
    <property type="match status" value="1"/>
</dbReference>
<dbReference type="PROSITE" id="PS00064">
    <property type="entry name" value="L_LDH"/>
    <property type="match status" value="1"/>
</dbReference>
<feature type="chain" id="PRO_1000126162" description="L-lactate dehydrogenase">
    <location>
        <begin position="1"/>
        <end position="311"/>
    </location>
</feature>
<feature type="active site" description="Proton acceptor" evidence="1">
    <location>
        <position position="173"/>
    </location>
</feature>
<feature type="binding site" evidence="1">
    <location>
        <position position="12"/>
    </location>
    <ligand>
        <name>NAD(+)</name>
        <dbReference type="ChEBI" id="CHEBI:57540"/>
    </ligand>
</feature>
<feature type="binding site" evidence="1">
    <location>
        <position position="33"/>
    </location>
    <ligand>
        <name>NAD(+)</name>
        <dbReference type="ChEBI" id="CHEBI:57540"/>
    </ligand>
</feature>
<feature type="binding site" evidence="1">
    <location>
        <position position="38"/>
    </location>
    <ligand>
        <name>NAD(+)</name>
        <dbReference type="ChEBI" id="CHEBI:57540"/>
    </ligand>
</feature>
<feature type="binding site" evidence="1">
    <location>
        <position position="63"/>
    </location>
    <ligand>
        <name>NAD(+)</name>
        <dbReference type="ChEBI" id="CHEBI:57540"/>
    </ligand>
</feature>
<feature type="binding site" evidence="1">
    <location>
        <begin position="77"/>
        <end position="78"/>
    </location>
    <ligand>
        <name>NAD(+)</name>
        <dbReference type="ChEBI" id="CHEBI:57540"/>
    </ligand>
</feature>
<feature type="binding site" evidence="1">
    <location>
        <position position="80"/>
    </location>
    <ligand>
        <name>substrate</name>
    </ligand>
</feature>
<feature type="binding site" evidence="1">
    <location>
        <position position="86"/>
    </location>
    <ligand>
        <name>substrate</name>
    </ligand>
</feature>
<feature type="binding site" evidence="1">
    <location>
        <begin position="116"/>
        <end position="118"/>
    </location>
    <ligand>
        <name>NAD(+)</name>
        <dbReference type="ChEBI" id="CHEBI:57540"/>
    </ligand>
</feature>
<feature type="binding site" evidence="1">
    <location>
        <begin position="118"/>
        <end position="121"/>
    </location>
    <ligand>
        <name>substrate</name>
    </ligand>
</feature>
<feature type="binding site" evidence="1">
    <location>
        <position position="141"/>
    </location>
    <ligand>
        <name>NAD(+)</name>
        <dbReference type="ChEBI" id="CHEBI:57540"/>
    </ligand>
</feature>
<feature type="binding site" evidence="1">
    <location>
        <begin position="146"/>
        <end position="149"/>
    </location>
    <ligand>
        <name>substrate</name>
    </ligand>
</feature>
<feature type="binding site" evidence="1">
    <location>
        <position position="151"/>
    </location>
    <ligand>
        <name>beta-D-fructose 1,6-bisphosphate</name>
        <dbReference type="ChEBI" id="CHEBI:32966"/>
        <note>allosteric activator</note>
    </ligand>
</feature>
<feature type="binding site" evidence="1">
    <location>
        <position position="166"/>
    </location>
    <ligand>
        <name>beta-D-fructose 1,6-bisphosphate</name>
        <dbReference type="ChEBI" id="CHEBI:32966"/>
        <note>allosteric activator</note>
    </ligand>
</feature>
<feature type="binding site" evidence="1">
    <location>
        <position position="228"/>
    </location>
    <ligand>
        <name>substrate</name>
    </ligand>
</feature>
<feature type="modified residue" description="Phosphotyrosine" evidence="1">
    <location>
        <position position="219"/>
    </location>
</feature>
<name>LDH_THEP3</name>
<reference key="1">
    <citation type="submission" date="2008-01" db="EMBL/GenBank/DDBJ databases">
        <title>Complete sequence of Thermoanaerobacter pseudethanolicus 39E.</title>
        <authorList>
            <person name="Copeland A."/>
            <person name="Lucas S."/>
            <person name="Lapidus A."/>
            <person name="Barry K."/>
            <person name="Glavina del Rio T."/>
            <person name="Dalin E."/>
            <person name="Tice H."/>
            <person name="Pitluck S."/>
            <person name="Bruce D."/>
            <person name="Goodwin L."/>
            <person name="Saunders E."/>
            <person name="Brettin T."/>
            <person name="Detter J.C."/>
            <person name="Han C."/>
            <person name="Schmutz J."/>
            <person name="Larimer F."/>
            <person name="Land M."/>
            <person name="Hauser L."/>
            <person name="Kyrpides N."/>
            <person name="Lykidis A."/>
            <person name="Hemme C."/>
            <person name="Fields M.W."/>
            <person name="He Z."/>
            <person name="Zhou J."/>
            <person name="Richardson P."/>
        </authorList>
    </citation>
    <scope>NUCLEOTIDE SEQUENCE [LARGE SCALE GENOMIC DNA]</scope>
    <source>
        <strain>ATCC 33223 / DSM 2355 / 39E</strain>
    </source>
</reference>
<accession>B0KDA4</accession>
<organism>
    <name type="scientific">Thermoanaerobacter pseudethanolicus (strain ATCC 33223 / 39E)</name>
    <name type="common">Clostridium thermohydrosulfuricum</name>
    <dbReference type="NCBI Taxonomy" id="340099"/>
    <lineage>
        <taxon>Bacteria</taxon>
        <taxon>Bacillati</taxon>
        <taxon>Bacillota</taxon>
        <taxon>Clostridia</taxon>
        <taxon>Thermoanaerobacterales</taxon>
        <taxon>Thermoanaerobacteraceae</taxon>
        <taxon>Thermoanaerobacter</taxon>
    </lineage>
</organism>
<protein>
    <recommendedName>
        <fullName evidence="1">L-lactate dehydrogenase</fullName>
        <shortName evidence="1">L-LDH</shortName>
        <ecNumber evidence="1">1.1.1.27</ecNumber>
    </recommendedName>
</protein>
<evidence type="ECO:0000255" key="1">
    <source>
        <dbReference type="HAMAP-Rule" id="MF_00488"/>
    </source>
</evidence>
<proteinExistence type="inferred from homology"/>
<sequence>MNKISIIGSGFVGATTAYTLALSGIAKTIVLIDINKDKAEGDALDISHGVPFISPVELYAGDYSDVSGSDIIIITAGAAQKPGETRLDLVKRNTMIFKDIVAKLIKVNDTAIYLIVTNPVDILTYVTYKISGLPYGRVLGSGTVLDSARFRYLLSKHCNIDPRNIHGYIIGEHGDSELAAWSITNIAGIPIDNYCNLCGKACEKDFREEIFNNVVRAAYTIIEKKGATYYAVALAVRRIVEAIFRDENSILTVSSPLTGQYGVTNVALSLPSVVGRNGIVNILELPLSQEEIAAFRRSAEVIKSVIQELDI</sequence>
<comment type="function">
    <text evidence="1">Catalyzes the conversion of lactate to pyruvate.</text>
</comment>
<comment type="catalytic activity">
    <reaction evidence="1">
        <text>(S)-lactate + NAD(+) = pyruvate + NADH + H(+)</text>
        <dbReference type="Rhea" id="RHEA:23444"/>
        <dbReference type="ChEBI" id="CHEBI:15361"/>
        <dbReference type="ChEBI" id="CHEBI:15378"/>
        <dbReference type="ChEBI" id="CHEBI:16651"/>
        <dbReference type="ChEBI" id="CHEBI:57540"/>
        <dbReference type="ChEBI" id="CHEBI:57945"/>
        <dbReference type="EC" id="1.1.1.27"/>
    </reaction>
</comment>
<comment type="activity regulation">
    <text evidence="1">Allosterically activated by fructose 1,6-bisphosphate (FBP).</text>
</comment>
<comment type="pathway">
    <text evidence="1">Fermentation; pyruvate fermentation to lactate; (S)-lactate from pyruvate: step 1/1.</text>
</comment>
<comment type="subunit">
    <text evidence="1">Homotetramer.</text>
</comment>
<comment type="subcellular location">
    <subcellularLocation>
        <location evidence="1">Cytoplasm</location>
    </subcellularLocation>
</comment>
<comment type="similarity">
    <text evidence="1">Belongs to the LDH/MDH superfamily. LDH family.</text>
</comment>
<keyword id="KW-0021">Allosteric enzyme</keyword>
<keyword id="KW-0963">Cytoplasm</keyword>
<keyword id="KW-0520">NAD</keyword>
<keyword id="KW-0560">Oxidoreductase</keyword>
<keyword id="KW-0597">Phosphoprotein</keyword>
<keyword id="KW-1185">Reference proteome</keyword>
<gene>
    <name evidence="1" type="primary">ldh</name>
    <name type="ordered locus">Teth39_1997</name>
</gene>